<protein>
    <recommendedName>
        <fullName evidence="1">Acetyl-coenzyme A synthetase</fullName>
        <shortName evidence="1">AcCoA synthetase</shortName>
        <shortName evidence="1">Acs</shortName>
        <ecNumber evidence="1">6.2.1.1</ecNumber>
    </recommendedName>
    <alternativeName>
        <fullName evidence="1">Acetate--CoA ligase</fullName>
    </alternativeName>
    <alternativeName>
        <fullName evidence="1">Acyl-activating enzyme</fullName>
    </alternativeName>
</protein>
<feature type="chain" id="PRO_1000065336" description="Acetyl-coenzyme A synthetase">
    <location>
        <begin position="1"/>
        <end position="652"/>
    </location>
</feature>
<feature type="binding site" evidence="1">
    <location>
        <begin position="191"/>
        <end position="194"/>
    </location>
    <ligand>
        <name>CoA</name>
        <dbReference type="ChEBI" id="CHEBI:57287"/>
    </ligand>
</feature>
<feature type="binding site" evidence="1">
    <location>
        <position position="311"/>
    </location>
    <ligand>
        <name>CoA</name>
        <dbReference type="ChEBI" id="CHEBI:57287"/>
    </ligand>
</feature>
<feature type="binding site" evidence="1">
    <location>
        <position position="335"/>
    </location>
    <ligand>
        <name>CoA</name>
        <dbReference type="ChEBI" id="CHEBI:57287"/>
    </ligand>
</feature>
<feature type="binding site" evidence="1">
    <location>
        <begin position="387"/>
        <end position="389"/>
    </location>
    <ligand>
        <name>ATP</name>
        <dbReference type="ChEBI" id="CHEBI:30616"/>
    </ligand>
</feature>
<feature type="binding site" evidence="1">
    <location>
        <begin position="411"/>
        <end position="416"/>
    </location>
    <ligand>
        <name>ATP</name>
        <dbReference type="ChEBI" id="CHEBI:30616"/>
    </ligand>
</feature>
<feature type="binding site" evidence="1">
    <location>
        <position position="500"/>
    </location>
    <ligand>
        <name>ATP</name>
        <dbReference type="ChEBI" id="CHEBI:30616"/>
    </ligand>
</feature>
<feature type="binding site" evidence="1">
    <location>
        <position position="515"/>
    </location>
    <ligand>
        <name>ATP</name>
        <dbReference type="ChEBI" id="CHEBI:30616"/>
    </ligand>
</feature>
<feature type="binding site" evidence="1">
    <location>
        <position position="523"/>
    </location>
    <ligand>
        <name>CoA</name>
        <dbReference type="ChEBI" id="CHEBI:57287"/>
    </ligand>
</feature>
<feature type="binding site" evidence="1">
    <location>
        <position position="526"/>
    </location>
    <ligand>
        <name>ATP</name>
        <dbReference type="ChEBI" id="CHEBI:30616"/>
    </ligand>
</feature>
<feature type="binding site" evidence="1">
    <location>
        <position position="537"/>
    </location>
    <ligand>
        <name>Mg(2+)</name>
        <dbReference type="ChEBI" id="CHEBI:18420"/>
    </ligand>
</feature>
<feature type="binding site" evidence="1">
    <location>
        <position position="539"/>
    </location>
    <ligand>
        <name>Mg(2+)</name>
        <dbReference type="ChEBI" id="CHEBI:18420"/>
    </ligand>
</feature>
<feature type="binding site" evidence="1">
    <location>
        <position position="542"/>
    </location>
    <ligand>
        <name>Mg(2+)</name>
        <dbReference type="ChEBI" id="CHEBI:18420"/>
    </ligand>
</feature>
<feature type="binding site" evidence="1">
    <location>
        <position position="584"/>
    </location>
    <ligand>
        <name>CoA</name>
        <dbReference type="ChEBI" id="CHEBI:57287"/>
    </ligand>
</feature>
<feature type="modified residue" description="N6-acetyllysine" evidence="1">
    <location>
        <position position="609"/>
    </location>
</feature>
<accession>A4TS06</accession>
<comment type="function">
    <text evidence="1">Catalyzes the conversion of acetate into acetyl-CoA (AcCoA), an essential intermediate at the junction of anabolic and catabolic pathways. Acs undergoes a two-step reaction. In the first half reaction, Acs combines acetate with ATP to form acetyl-adenylate (AcAMP) intermediate. In the second half reaction, it can then transfer the acetyl group from AcAMP to the sulfhydryl group of CoA, forming the product AcCoA.</text>
</comment>
<comment type="function">
    <text evidence="1">Enables the cell to use acetate during aerobic growth to generate energy via the TCA cycle, and biosynthetic compounds via the glyoxylate shunt. Acetylates CheY, the response regulator involved in flagellar movement and chemotaxis.</text>
</comment>
<comment type="catalytic activity">
    <reaction evidence="1">
        <text>acetate + ATP + CoA = acetyl-CoA + AMP + diphosphate</text>
        <dbReference type="Rhea" id="RHEA:23176"/>
        <dbReference type="ChEBI" id="CHEBI:30089"/>
        <dbReference type="ChEBI" id="CHEBI:30616"/>
        <dbReference type="ChEBI" id="CHEBI:33019"/>
        <dbReference type="ChEBI" id="CHEBI:57287"/>
        <dbReference type="ChEBI" id="CHEBI:57288"/>
        <dbReference type="ChEBI" id="CHEBI:456215"/>
        <dbReference type="EC" id="6.2.1.1"/>
    </reaction>
</comment>
<comment type="cofactor">
    <cofactor evidence="1">
        <name>Mg(2+)</name>
        <dbReference type="ChEBI" id="CHEBI:18420"/>
    </cofactor>
</comment>
<comment type="PTM">
    <text evidence="1">Acetylated. Deacetylation by the SIR2-homolog deacetylase activates the enzyme.</text>
</comment>
<comment type="similarity">
    <text evidence="1">Belongs to the ATP-dependent AMP-binding enzyme family.</text>
</comment>
<proteinExistence type="inferred from homology"/>
<reference key="1">
    <citation type="submission" date="2007-02" db="EMBL/GenBank/DDBJ databases">
        <title>Complete sequence of chromosome of Yersinia pestis Pestoides F.</title>
        <authorList>
            <consortium name="US DOE Joint Genome Institute"/>
            <person name="Copeland A."/>
            <person name="Lucas S."/>
            <person name="Lapidus A."/>
            <person name="Barry K."/>
            <person name="Detter J.C."/>
            <person name="Glavina del Rio T."/>
            <person name="Hammon N."/>
            <person name="Israni S."/>
            <person name="Dalin E."/>
            <person name="Tice H."/>
            <person name="Pitluck S."/>
            <person name="Di Bartolo G."/>
            <person name="Chain P."/>
            <person name="Malfatti S."/>
            <person name="Shin M."/>
            <person name="Vergez L."/>
            <person name="Schmutz J."/>
            <person name="Larimer F."/>
            <person name="Land M."/>
            <person name="Hauser L."/>
            <person name="Worsham P."/>
            <person name="Chu M."/>
            <person name="Bearden S."/>
            <person name="Garcia E."/>
            <person name="Richardson P."/>
        </authorList>
    </citation>
    <scope>NUCLEOTIDE SEQUENCE [LARGE SCALE GENOMIC DNA]</scope>
    <source>
        <strain>Pestoides F</strain>
    </source>
</reference>
<dbReference type="EC" id="6.2.1.1" evidence="1"/>
<dbReference type="EMBL" id="CP000668">
    <property type="protein sequence ID" value="ABP42068.1"/>
    <property type="molecule type" value="Genomic_DNA"/>
</dbReference>
<dbReference type="RefSeq" id="WP_002209031.1">
    <property type="nucleotide sequence ID" value="NZ_CP009715.1"/>
</dbReference>
<dbReference type="SMR" id="A4TS06"/>
<dbReference type="GeneID" id="57974350"/>
<dbReference type="KEGG" id="ypp:YPDSF_3718"/>
<dbReference type="PATRIC" id="fig|386656.14.peg.384"/>
<dbReference type="GO" id="GO:0005829">
    <property type="term" value="C:cytosol"/>
    <property type="evidence" value="ECO:0007669"/>
    <property type="project" value="TreeGrafter"/>
</dbReference>
<dbReference type="GO" id="GO:0003987">
    <property type="term" value="F:acetate-CoA ligase activity"/>
    <property type="evidence" value="ECO:0007669"/>
    <property type="project" value="UniProtKB-UniRule"/>
</dbReference>
<dbReference type="GO" id="GO:0016208">
    <property type="term" value="F:AMP binding"/>
    <property type="evidence" value="ECO:0007669"/>
    <property type="project" value="InterPro"/>
</dbReference>
<dbReference type="GO" id="GO:0005524">
    <property type="term" value="F:ATP binding"/>
    <property type="evidence" value="ECO:0007669"/>
    <property type="project" value="UniProtKB-KW"/>
</dbReference>
<dbReference type="GO" id="GO:0046872">
    <property type="term" value="F:metal ion binding"/>
    <property type="evidence" value="ECO:0007669"/>
    <property type="project" value="UniProtKB-KW"/>
</dbReference>
<dbReference type="GO" id="GO:0019427">
    <property type="term" value="P:acetyl-CoA biosynthetic process from acetate"/>
    <property type="evidence" value="ECO:0007669"/>
    <property type="project" value="UniProtKB-UniRule"/>
</dbReference>
<dbReference type="GO" id="GO:0006935">
    <property type="term" value="P:chemotaxis"/>
    <property type="evidence" value="ECO:0007669"/>
    <property type="project" value="UniProtKB-UniRule"/>
</dbReference>
<dbReference type="CDD" id="cd05966">
    <property type="entry name" value="ACS"/>
    <property type="match status" value="1"/>
</dbReference>
<dbReference type="FunFam" id="3.30.300.30:FF:000004">
    <property type="entry name" value="Acetyl-coenzyme A synthetase"/>
    <property type="match status" value="1"/>
</dbReference>
<dbReference type="FunFam" id="3.40.50.12780:FF:000001">
    <property type="entry name" value="Acetyl-coenzyme A synthetase"/>
    <property type="match status" value="1"/>
</dbReference>
<dbReference type="Gene3D" id="3.30.300.30">
    <property type="match status" value="1"/>
</dbReference>
<dbReference type="Gene3D" id="3.40.50.12780">
    <property type="entry name" value="N-terminal domain of ligase-like"/>
    <property type="match status" value="1"/>
</dbReference>
<dbReference type="HAMAP" id="MF_01123">
    <property type="entry name" value="Ac_CoA_synth"/>
    <property type="match status" value="1"/>
</dbReference>
<dbReference type="InterPro" id="IPR011904">
    <property type="entry name" value="Ac_CoA_lig"/>
</dbReference>
<dbReference type="InterPro" id="IPR032387">
    <property type="entry name" value="ACAS_N"/>
</dbReference>
<dbReference type="InterPro" id="IPR025110">
    <property type="entry name" value="AMP-bd_C"/>
</dbReference>
<dbReference type="InterPro" id="IPR045851">
    <property type="entry name" value="AMP-bd_C_sf"/>
</dbReference>
<dbReference type="InterPro" id="IPR020845">
    <property type="entry name" value="AMP-binding_CS"/>
</dbReference>
<dbReference type="InterPro" id="IPR000873">
    <property type="entry name" value="AMP-dep_synth/lig_dom"/>
</dbReference>
<dbReference type="InterPro" id="IPR042099">
    <property type="entry name" value="ANL_N_sf"/>
</dbReference>
<dbReference type="NCBIfam" id="TIGR02188">
    <property type="entry name" value="Ac_CoA_lig_AcsA"/>
    <property type="match status" value="1"/>
</dbReference>
<dbReference type="NCBIfam" id="NF001208">
    <property type="entry name" value="PRK00174.1"/>
    <property type="match status" value="1"/>
</dbReference>
<dbReference type="PANTHER" id="PTHR24095">
    <property type="entry name" value="ACETYL-COENZYME A SYNTHETASE"/>
    <property type="match status" value="1"/>
</dbReference>
<dbReference type="PANTHER" id="PTHR24095:SF243">
    <property type="entry name" value="ACETYL-COENZYME A SYNTHETASE"/>
    <property type="match status" value="1"/>
</dbReference>
<dbReference type="Pfam" id="PF16177">
    <property type="entry name" value="ACAS_N"/>
    <property type="match status" value="1"/>
</dbReference>
<dbReference type="Pfam" id="PF00501">
    <property type="entry name" value="AMP-binding"/>
    <property type="match status" value="1"/>
</dbReference>
<dbReference type="Pfam" id="PF13193">
    <property type="entry name" value="AMP-binding_C"/>
    <property type="match status" value="1"/>
</dbReference>
<dbReference type="SUPFAM" id="SSF56801">
    <property type="entry name" value="Acetyl-CoA synthetase-like"/>
    <property type="match status" value="1"/>
</dbReference>
<dbReference type="PROSITE" id="PS00455">
    <property type="entry name" value="AMP_BINDING"/>
    <property type="match status" value="1"/>
</dbReference>
<organism>
    <name type="scientific">Yersinia pestis (strain Pestoides F)</name>
    <dbReference type="NCBI Taxonomy" id="386656"/>
    <lineage>
        <taxon>Bacteria</taxon>
        <taxon>Pseudomonadati</taxon>
        <taxon>Pseudomonadota</taxon>
        <taxon>Gammaproteobacteria</taxon>
        <taxon>Enterobacterales</taxon>
        <taxon>Yersiniaceae</taxon>
        <taxon>Yersinia</taxon>
    </lineage>
</organism>
<evidence type="ECO:0000255" key="1">
    <source>
        <dbReference type="HAMAP-Rule" id="MF_01123"/>
    </source>
</evidence>
<name>ACSA_YERPP</name>
<sequence length="652" mass="72072">MSQIHKHPIPAAIAEHALITPEKYQHYYQQSVQNPDEFWGEQGKIIDWIKPYKTVKNTSFDPGHVSIRWFEDGTLNLAANCLDRHLAERGDQTAIIWEGDDPNQSKTVTYKQLHHDVCQFANVLKSLGVKKGDVVAIYMPMVPEAAVAMLACARIGAVHSVIFGGFSPDAVAGRIIDSHSKLVITADEGIRAGRAIPLKKNVDEALKNPAITSIKNVVVFQRTGNASYWEDGRDVWWHDLIKEASADCPPEEMNAEDPLFILYTSGSTGKPKGVVHTTGGYLVYAALTFKYVFDYHPGDIYWCTADVGWVTGHSYLLYGPLACGAITLMFEGVPNYPGVNRLSQVVDKHKVNILYTAPTAIRALMAEGDKAIEGTKRDSLRIMGSVGEPINPEAWEWYYNKIGNSKCPIVDTWWQTETGGFMITPLPGATELKAGSATRPFFGVQPALVDNLGNPQEGVAEGNLVITDSWPGQARTLFGDHERFEQTYFSTFKGMYFSGDGARRDEDGYYWITGRVDDVLNVSGHRLGTAEIESALVAHPKIAEAAVVGVPHNIKGQAIYAYITLNHGEEPTPELYTEVRNWVRKEIGPLATPDILHWTDSLPKTRSGKIMRRILRKIATGDTSNLGDTSTLADPSVVEKLLEEKQSMQTPS</sequence>
<keyword id="KW-0007">Acetylation</keyword>
<keyword id="KW-0067">ATP-binding</keyword>
<keyword id="KW-0436">Ligase</keyword>
<keyword id="KW-0460">Magnesium</keyword>
<keyword id="KW-0479">Metal-binding</keyword>
<keyword id="KW-0547">Nucleotide-binding</keyword>
<gene>
    <name evidence="1" type="primary">acs</name>
    <name type="ordered locus">YPDSF_3718</name>
</gene>